<proteinExistence type="predicted"/>
<organism>
    <name type="scientific">Methylophilus leisingeri (strain DSM 6813 / VKM B-2013 / DM11)</name>
    <dbReference type="NCBI Taxonomy" id="45393"/>
    <lineage>
        <taxon>Bacteria</taxon>
        <taxon>Pseudomonadati</taxon>
        <taxon>Pseudomonadota</taxon>
        <taxon>Betaproteobacteria</taxon>
        <taxon>Nitrosomonadales</taxon>
        <taxon>Methylophilaceae</taxon>
        <taxon>Methylophilus</taxon>
    </lineage>
</organism>
<accession>P43388</accession>
<feature type="chain" id="PRO_0000066190" description="Uncharacterized protein in dcmA 3'region">
    <location>
        <begin position="1"/>
        <end position="216" status="greater than"/>
    </location>
</feature>
<feature type="non-terminal residue">
    <location>
        <position position="216"/>
    </location>
</feature>
<name>YDCM_METLD</name>
<dbReference type="EMBL" id="L26544">
    <property type="protein sequence ID" value="AAA25444.1"/>
    <property type="molecule type" value="Genomic_DNA"/>
</dbReference>
<dbReference type="GO" id="GO:0016491">
    <property type="term" value="F:oxidoreductase activity"/>
    <property type="evidence" value="ECO:0007669"/>
    <property type="project" value="InterPro"/>
</dbReference>
<dbReference type="InterPro" id="IPR044053">
    <property type="entry name" value="AsaB-like"/>
</dbReference>
<dbReference type="NCBIfam" id="NF041278">
    <property type="entry name" value="CmcJ_NvfI_EfuI"/>
    <property type="match status" value="1"/>
</dbReference>
<dbReference type="PANTHER" id="PTHR34598">
    <property type="entry name" value="BLL6449 PROTEIN"/>
    <property type="match status" value="1"/>
</dbReference>
<dbReference type="PANTHER" id="PTHR34598:SF3">
    <property type="entry name" value="OXIDOREDUCTASE AN1597"/>
    <property type="match status" value="1"/>
</dbReference>
<protein>
    <recommendedName>
        <fullName>Uncharacterized protein in dcmA 3'region</fullName>
    </recommendedName>
</protein>
<sequence>MQSFLKLLLSYRIAKMNTTIETEVNYLDQSVESSLYRNGKVYTFRDTDGNDSNWYGAKLTPQKVVINDAREKNHTIDANGFELINAPLLKENLDFLDLNDVVKNYYPQCEDILKKATHASEVYAFDHNIRWKSANEQQTQITDGQQIQQPIYVMHGDYTISSVEDRIYALGKPLGDNDTLKKFLEPGAALIPHNVISKIFDEKKRFSIINVWRNID</sequence>
<reference key="1">
    <citation type="journal article" date="1994" name="J. Bacteriol.">
        <title>Isolation and characterization of the Methylophilus sp. strain DM11 gene encoding dichloromethane dehalogenase/glutathione S-transferase.</title>
        <authorList>
            <person name="Bader R."/>
            <person name="Leisinger T."/>
        </authorList>
    </citation>
    <scope>NUCLEOTIDE SEQUENCE [GENOMIC DNA]</scope>
</reference>